<comment type="function">
    <text evidence="1">Catalyzes the reversible interconversion of serine and glycine with tetrahydrofolate (THF) serving as the one-carbon carrier. This reaction serves as the major source of one-carbon groups required for the biosynthesis of purines, thymidylate, methionine, and other important biomolecules. Also exhibits THF-independent aldolase activity toward beta-hydroxyamino acids, producing glycine and aldehydes, via a retro-aldol mechanism.</text>
</comment>
<comment type="catalytic activity">
    <reaction evidence="1">
        <text>(6R)-5,10-methylene-5,6,7,8-tetrahydrofolate + glycine + H2O = (6S)-5,6,7,8-tetrahydrofolate + L-serine</text>
        <dbReference type="Rhea" id="RHEA:15481"/>
        <dbReference type="ChEBI" id="CHEBI:15377"/>
        <dbReference type="ChEBI" id="CHEBI:15636"/>
        <dbReference type="ChEBI" id="CHEBI:33384"/>
        <dbReference type="ChEBI" id="CHEBI:57305"/>
        <dbReference type="ChEBI" id="CHEBI:57453"/>
        <dbReference type="EC" id="2.1.2.1"/>
    </reaction>
</comment>
<comment type="cofactor">
    <cofactor evidence="1">
        <name>pyridoxal 5'-phosphate</name>
        <dbReference type="ChEBI" id="CHEBI:597326"/>
    </cofactor>
</comment>
<comment type="pathway">
    <text evidence="1">One-carbon metabolism; tetrahydrofolate interconversion.</text>
</comment>
<comment type="pathway">
    <text evidence="1">Amino-acid biosynthesis; glycine biosynthesis; glycine from L-serine: step 1/1.</text>
</comment>
<comment type="subunit">
    <text evidence="1">Homodimer.</text>
</comment>
<comment type="subcellular location">
    <subcellularLocation>
        <location evidence="1">Cytoplasm</location>
    </subcellularLocation>
</comment>
<comment type="similarity">
    <text evidence="1">Belongs to the SHMT family.</text>
</comment>
<accession>B2J2A2</accession>
<reference key="1">
    <citation type="journal article" date="2013" name="Plant Physiol.">
        <title>A Nostoc punctiforme Sugar Transporter Necessary to Establish a Cyanobacterium-Plant Symbiosis.</title>
        <authorList>
            <person name="Ekman M."/>
            <person name="Picossi S."/>
            <person name="Campbell E.L."/>
            <person name="Meeks J.C."/>
            <person name="Flores E."/>
        </authorList>
    </citation>
    <scope>NUCLEOTIDE SEQUENCE [LARGE SCALE GENOMIC DNA]</scope>
    <source>
        <strain>ATCC 29133 / PCC 73102</strain>
    </source>
</reference>
<dbReference type="EC" id="2.1.2.1" evidence="1"/>
<dbReference type="EMBL" id="CP001037">
    <property type="protein sequence ID" value="ACC83488.1"/>
    <property type="molecule type" value="Genomic_DNA"/>
</dbReference>
<dbReference type="RefSeq" id="WP_012411441.1">
    <property type="nucleotide sequence ID" value="NC_010628.1"/>
</dbReference>
<dbReference type="SMR" id="B2J2A2"/>
<dbReference type="STRING" id="63737.Npun_F5156"/>
<dbReference type="EnsemblBacteria" id="ACC83488">
    <property type="protein sequence ID" value="ACC83488"/>
    <property type="gene ID" value="Npun_F5156"/>
</dbReference>
<dbReference type="KEGG" id="npu:Npun_F5156"/>
<dbReference type="eggNOG" id="COG0112">
    <property type="taxonomic scope" value="Bacteria"/>
</dbReference>
<dbReference type="HOGENOM" id="CLU_022477_2_1_3"/>
<dbReference type="OrthoDB" id="9803846at2"/>
<dbReference type="PhylomeDB" id="B2J2A2"/>
<dbReference type="UniPathway" id="UPA00193"/>
<dbReference type="UniPathway" id="UPA00288">
    <property type="reaction ID" value="UER01023"/>
</dbReference>
<dbReference type="Proteomes" id="UP000001191">
    <property type="component" value="Chromosome"/>
</dbReference>
<dbReference type="GO" id="GO:0005829">
    <property type="term" value="C:cytosol"/>
    <property type="evidence" value="ECO:0007669"/>
    <property type="project" value="TreeGrafter"/>
</dbReference>
<dbReference type="GO" id="GO:0004372">
    <property type="term" value="F:glycine hydroxymethyltransferase activity"/>
    <property type="evidence" value="ECO:0007669"/>
    <property type="project" value="UniProtKB-UniRule"/>
</dbReference>
<dbReference type="GO" id="GO:0030170">
    <property type="term" value="F:pyridoxal phosphate binding"/>
    <property type="evidence" value="ECO:0007669"/>
    <property type="project" value="UniProtKB-UniRule"/>
</dbReference>
<dbReference type="GO" id="GO:0019264">
    <property type="term" value="P:glycine biosynthetic process from serine"/>
    <property type="evidence" value="ECO:0007669"/>
    <property type="project" value="UniProtKB-UniRule"/>
</dbReference>
<dbReference type="GO" id="GO:0035999">
    <property type="term" value="P:tetrahydrofolate interconversion"/>
    <property type="evidence" value="ECO:0007669"/>
    <property type="project" value="UniProtKB-UniRule"/>
</dbReference>
<dbReference type="CDD" id="cd00378">
    <property type="entry name" value="SHMT"/>
    <property type="match status" value="1"/>
</dbReference>
<dbReference type="FunFam" id="3.40.640.10:FF:000001">
    <property type="entry name" value="Serine hydroxymethyltransferase"/>
    <property type="match status" value="1"/>
</dbReference>
<dbReference type="FunFam" id="3.90.1150.10:FF:000003">
    <property type="entry name" value="Serine hydroxymethyltransferase"/>
    <property type="match status" value="1"/>
</dbReference>
<dbReference type="Gene3D" id="3.90.1150.10">
    <property type="entry name" value="Aspartate Aminotransferase, domain 1"/>
    <property type="match status" value="1"/>
</dbReference>
<dbReference type="Gene3D" id="3.40.640.10">
    <property type="entry name" value="Type I PLP-dependent aspartate aminotransferase-like (Major domain)"/>
    <property type="match status" value="1"/>
</dbReference>
<dbReference type="HAMAP" id="MF_00051">
    <property type="entry name" value="SHMT"/>
    <property type="match status" value="1"/>
</dbReference>
<dbReference type="InterPro" id="IPR015424">
    <property type="entry name" value="PyrdxlP-dep_Trfase"/>
</dbReference>
<dbReference type="InterPro" id="IPR015421">
    <property type="entry name" value="PyrdxlP-dep_Trfase_major"/>
</dbReference>
<dbReference type="InterPro" id="IPR015422">
    <property type="entry name" value="PyrdxlP-dep_Trfase_small"/>
</dbReference>
<dbReference type="InterPro" id="IPR001085">
    <property type="entry name" value="Ser_HO-MeTrfase"/>
</dbReference>
<dbReference type="InterPro" id="IPR049943">
    <property type="entry name" value="Ser_HO-MeTrfase-like"/>
</dbReference>
<dbReference type="InterPro" id="IPR019798">
    <property type="entry name" value="Ser_HO-MeTrfase_PLP_BS"/>
</dbReference>
<dbReference type="InterPro" id="IPR039429">
    <property type="entry name" value="SHMT-like_dom"/>
</dbReference>
<dbReference type="NCBIfam" id="NF000586">
    <property type="entry name" value="PRK00011.1"/>
    <property type="match status" value="1"/>
</dbReference>
<dbReference type="PANTHER" id="PTHR11680">
    <property type="entry name" value="SERINE HYDROXYMETHYLTRANSFERASE"/>
    <property type="match status" value="1"/>
</dbReference>
<dbReference type="PANTHER" id="PTHR11680:SF35">
    <property type="entry name" value="SERINE HYDROXYMETHYLTRANSFERASE 1"/>
    <property type="match status" value="1"/>
</dbReference>
<dbReference type="Pfam" id="PF00464">
    <property type="entry name" value="SHMT"/>
    <property type="match status" value="1"/>
</dbReference>
<dbReference type="PIRSF" id="PIRSF000412">
    <property type="entry name" value="SHMT"/>
    <property type="match status" value="1"/>
</dbReference>
<dbReference type="SUPFAM" id="SSF53383">
    <property type="entry name" value="PLP-dependent transferases"/>
    <property type="match status" value="1"/>
</dbReference>
<dbReference type="PROSITE" id="PS00096">
    <property type="entry name" value="SHMT"/>
    <property type="match status" value="1"/>
</dbReference>
<protein>
    <recommendedName>
        <fullName evidence="1">Serine hydroxymethyltransferase</fullName>
        <shortName evidence="1">SHMT</shortName>
        <shortName evidence="1">Serine methylase</shortName>
        <ecNumber evidence="1">2.1.2.1</ecNumber>
    </recommendedName>
</protein>
<organism>
    <name type="scientific">Nostoc punctiforme (strain ATCC 29133 / PCC 73102)</name>
    <dbReference type="NCBI Taxonomy" id="63737"/>
    <lineage>
        <taxon>Bacteria</taxon>
        <taxon>Bacillati</taxon>
        <taxon>Cyanobacteriota</taxon>
        <taxon>Cyanophyceae</taxon>
        <taxon>Nostocales</taxon>
        <taxon>Nostocaceae</taxon>
        <taxon>Nostoc</taxon>
    </lineage>
</organism>
<proteinExistence type="inferred from homology"/>
<keyword id="KW-0028">Amino-acid biosynthesis</keyword>
<keyword id="KW-0963">Cytoplasm</keyword>
<keyword id="KW-0554">One-carbon metabolism</keyword>
<keyword id="KW-0663">Pyridoxal phosphate</keyword>
<keyword id="KW-1185">Reference proteome</keyword>
<keyword id="KW-0808">Transferase</keyword>
<feature type="chain" id="PRO_1000091564" description="Serine hydroxymethyltransferase">
    <location>
        <begin position="1"/>
        <end position="427"/>
    </location>
</feature>
<feature type="binding site" evidence="1">
    <location>
        <position position="122"/>
    </location>
    <ligand>
        <name>(6S)-5,6,7,8-tetrahydrofolate</name>
        <dbReference type="ChEBI" id="CHEBI:57453"/>
    </ligand>
</feature>
<feature type="binding site" evidence="1">
    <location>
        <begin position="126"/>
        <end position="128"/>
    </location>
    <ligand>
        <name>(6S)-5,6,7,8-tetrahydrofolate</name>
        <dbReference type="ChEBI" id="CHEBI:57453"/>
    </ligand>
</feature>
<feature type="binding site" evidence="1">
    <location>
        <begin position="355"/>
        <end position="357"/>
    </location>
    <ligand>
        <name>(6S)-5,6,7,8-tetrahydrofolate</name>
        <dbReference type="ChEBI" id="CHEBI:57453"/>
    </ligand>
</feature>
<feature type="site" description="Plays an important role in substrate specificity" evidence="1">
    <location>
        <position position="230"/>
    </location>
</feature>
<feature type="modified residue" description="N6-(pyridoxal phosphate)lysine" evidence="1">
    <location>
        <position position="231"/>
    </location>
</feature>
<sequence>MTRTNSDFLSSTDPAIAELINDELQRQRDHLELIASENFTSAAVLAAQGSVLTNKYAEGLPGKRYYGGCEYIDKIEQLAINRAKQIFGAAHANVQPHSGAQANFAVFLSLLQPGDKIMGMDLSHGGHLTHGSPVNVSGKWFQVSHYGVSQQTEQLDYDQIRELALRERPKLLICGYSAYPRIIDFEKFRSIADEVGAYLLADIAHIAGLVASGLHPDPIPHCHVVTTTTHKTLRGPRGGLILTSDAELGKKLDKSVFPGTQGGPLEHVIAGKAVAFGEALKPEFKTYSAQVIENARALAEQLQNRGLKLVSNGTDNHLLLVDLRSVNLTGKQADQLVSTVNITANKNTIPFDPQSPFVTSGLRLGSPAMTTRGLGVAEFTEIANIISDRLLSPDSDVVTQDCRQRVAALCDRFPLYPHLEIPVPALA</sequence>
<gene>
    <name evidence="1" type="primary">glyA</name>
    <name type="ordered locus">Npun_F5156</name>
</gene>
<name>GLYA_NOSP7</name>
<evidence type="ECO:0000255" key="1">
    <source>
        <dbReference type="HAMAP-Rule" id="MF_00051"/>
    </source>
</evidence>